<gene>
    <name evidence="7" type="primary">Ednra</name>
    <name type="synonym">Gpcr10</name>
</gene>
<evidence type="ECO:0000250" key="1"/>
<evidence type="ECO:0000250" key="2">
    <source>
        <dbReference type="UniProtKB" id="P28088"/>
    </source>
</evidence>
<evidence type="ECO:0000255" key="3"/>
<evidence type="ECO:0000255" key="4">
    <source>
        <dbReference type="PROSITE-ProRule" id="PRU00521"/>
    </source>
</evidence>
<evidence type="ECO:0000256" key="5">
    <source>
        <dbReference type="SAM" id="MobiDB-lite"/>
    </source>
</evidence>
<evidence type="ECO:0000305" key="6"/>
<evidence type="ECO:0000312" key="7">
    <source>
        <dbReference type="MGI" id="MGI:105923"/>
    </source>
</evidence>
<comment type="function">
    <text evidence="1">Receptor for endothelin-1. Mediates its action by association with G proteins that activate a phosphatidylinositol-calcium second messenger system. The rank order of binding affinities for ET-A is: ET1 &gt; ET2 &gt;&gt; ET3 (By similarity).</text>
</comment>
<comment type="subunit">
    <text evidence="1">Interacts with HDAC7 and KAT5.</text>
</comment>
<comment type="subcellular location">
    <subcellularLocation>
        <location>Cell membrane</location>
        <topology>Multi-pass membrane protein</topology>
    </subcellularLocation>
</comment>
<comment type="similarity">
    <text evidence="4">Belongs to the G-protein coupled receptor 1 family. Endothelin receptor subfamily. EDNRA sub-subfamily.</text>
</comment>
<keyword id="KW-1003">Cell membrane</keyword>
<keyword id="KW-1015">Disulfide bond</keyword>
<keyword id="KW-0297">G-protein coupled receptor</keyword>
<keyword id="KW-0325">Glycoprotein</keyword>
<keyword id="KW-0472">Membrane</keyword>
<keyword id="KW-0597">Phosphoprotein</keyword>
<keyword id="KW-0675">Receptor</keyword>
<keyword id="KW-1185">Reference proteome</keyword>
<keyword id="KW-0732">Signal</keyword>
<keyword id="KW-0807">Transducer</keyword>
<keyword id="KW-0812">Transmembrane</keyword>
<keyword id="KW-1133">Transmembrane helix</keyword>
<name>EDNRA_MOUSE</name>
<protein>
    <recommendedName>
        <fullName evidence="6">Endothelin-1 receptor</fullName>
    </recommendedName>
    <alternativeName>
        <fullName evidence="7">Endothelin receptor type A</fullName>
        <shortName>ET-A</shortName>
        <shortName>ET-AR</shortName>
    </alternativeName>
</protein>
<sequence>MSIFCLAAYFWLTMVGGVMADNPERYSANLSSHMEDFTPFPGTEINFLGTTHRPPNLALPSNGSMHGYCPQQTKITTAFKYINTVISCTIFIVGMVGNATLLRIIYQNKCMRNGPNALIASLALGDLIYVVIDLPINVFKLLAGRWPFDHNDFGVFLCKLFPFLQKSSVGITVLNLCALSVDRYRAVASWSRVQGIGIPLITAIEIVSIWILSFILAIPEAIGFVMVPFEYKGELHRTCMLNATSKFMEFYQDVKDWWLFGFYFCMPLVCTAIFYTLMTCEMLNRRNGSLRIALSEHLKQRREVAKTVFCLVVIFALCWFPLHLSRILKKTVYDEMDKNRCELLSFLLLMDYIGINLATMNSCINPIALYFVSKKFKNCFQSCLCCCCHQSKSLMTSVPMNGTSIQWKNQEQNNHNTERSSHKDSMN</sequence>
<accession>Q61614</accession>
<accession>O54993</accession>
<accession>Q91VV2</accession>
<feature type="signal peptide" evidence="3">
    <location>
        <begin position="1"/>
        <end position="20"/>
    </location>
</feature>
<feature type="chain" id="PRO_0000012722" description="Endothelin-1 receptor">
    <location>
        <begin position="21"/>
        <end position="427"/>
    </location>
</feature>
<feature type="topological domain" description="Extracellular" evidence="3">
    <location>
        <begin position="21"/>
        <end position="80"/>
    </location>
</feature>
<feature type="transmembrane region" description="Helical; Name=1" evidence="3">
    <location>
        <begin position="81"/>
        <end position="102"/>
    </location>
</feature>
<feature type="topological domain" description="Cytoplasmic" evidence="3">
    <location>
        <begin position="103"/>
        <end position="112"/>
    </location>
</feature>
<feature type="transmembrane region" description="Helical; Name=2" evidence="3">
    <location>
        <begin position="113"/>
        <end position="132"/>
    </location>
</feature>
<feature type="topological domain" description="Extracellular" evidence="3">
    <location>
        <begin position="133"/>
        <end position="159"/>
    </location>
</feature>
<feature type="transmembrane region" description="Helical; Name=3" evidence="3">
    <location>
        <begin position="160"/>
        <end position="181"/>
    </location>
</feature>
<feature type="topological domain" description="Cytoplasmic" evidence="3">
    <location>
        <begin position="182"/>
        <end position="205"/>
    </location>
</feature>
<feature type="transmembrane region" description="Helical; Name=4" evidence="3">
    <location>
        <begin position="206"/>
        <end position="229"/>
    </location>
</feature>
<feature type="topological domain" description="Extracellular" evidence="3">
    <location>
        <begin position="230"/>
        <end position="256"/>
    </location>
</feature>
<feature type="transmembrane region" description="Helical; Name=5" evidence="3">
    <location>
        <begin position="257"/>
        <end position="278"/>
    </location>
</feature>
<feature type="topological domain" description="Cytoplasmic" evidence="3">
    <location>
        <begin position="279"/>
        <end position="306"/>
    </location>
</feature>
<feature type="transmembrane region" description="Helical; Name=6" evidence="3">
    <location>
        <begin position="307"/>
        <end position="328"/>
    </location>
</feature>
<feature type="topological domain" description="Extracellular" evidence="3">
    <location>
        <begin position="329"/>
        <end position="347"/>
    </location>
</feature>
<feature type="transmembrane region" description="Helical; Name=7" evidence="3">
    <location>
        <begin position="348"/>
        <end position="372"/>
    </location>
</feature>
<feature type="topological domain" description="Cytoplasmic" evidence="3">
    <location>
        <begin position="373"/>
        <end position="427"/>
    </location>
</feature>
<feature type="region of interest" description="Disordered" evidence="5">
    <location>
        <begin position="408"/>
        <end position="427"/>
    </location>
</feature>
<feature type="compositionally biased region" description="Basic and acidic residues" evidence="5">
    <location>
        <begin position="416"/>
        <end position="427"/>
    </location>
</feature>
<feature type="modified residue" description="Phosphoserine" evidence="2">
    <location>
        <position position="425"/>
    </location>
</feature>
<feature type="glycosylation site" description="N-linked (GlcNAc...) asparagine" evidence="3">
    <location>
        <position position="29"/>
    </location>
</feature>
<feature type="glycosylation site" description="N-linked (GlcNAc...) asparagine" evidence="3">
    <location>
        <position position="62"/>
    </location>
</feature>
<feature type="glycosylation site" description="N-linked (GlcNAc...) asparagine" evidence="3">
    <location>
        <position position="242"/>
    </location>
</feature>
<feature type="disulfide bond" evidence="4">
    <location>
        <begin position="158"/>
        <end position="239"/>
    </location>
</feature>
<reference key="1">
    <citation type="journal article" date="2005" name="Science">
        <title>The transcriptional landscape of the mammalian genome.</title>
        <authorList>
            <person name="Carninci P."/>
            <person name="Kasukawa T."/>
            <person name="Katayama S."/>
            <person name="Gough J."/>
            <person name="Frith M.C."/>
            <person name="Maeda N."/>
            <person name="Oyama R."/>
            <person name="Ravasi T."/>
            <person name="Lenhard B."/>
            <person name="Wells C."/>
            <person name="Kodzius R."/>
            <person name="Shimokawa K."/>
            <person name="Bajic V.B."/>
            <person name="Brenner S.E."/>
            <person name="Batalov S."/>
            <person name="Forrest A.R."/>
            <person name="Zavolan M."/>
            <person name="Davis M.J."/>
            <person name="Wilming L.G."/>
            <person name="Aidinis V."/>
            <person name="Allen J.E."/>
            <person name="Ambesi-Impiombato A."/>
            <person name="Apweiler R."/>
            <person name="Aturaliya R.N."/>
            <person name="Bailey T.L."/>
            <person name="Bansal M."/>
            <person name="Baxter L."/>
            <person name="Beisel K.W."/>
            <person name="Bersano T."/>
            <person name="Bono H."/>
            <person name="Chalk A.M."/>
            <person name="Chiu K.P."/>
            <person name="Choudhary V."/>
            <person name="Christoffels A."/>
            <person name="Clutterbuck D.R."/>
            <person name="Crowe M.L."/>
            <person name="Dalla E."/>
            <person name="Dalrymple B.P."/>
            <person name="de Bono B."/>
            <person name="Della Gatta G."/>
            <person name="di Bernardo D."/>
            <person name="Down T."/>
            <person name="Engstrom P."/>
            <person name="Fagiolini M."/>
            <person name="Faulkner G."/>
            <person name="Fletcher C.F."/>
            <person name="Fukushima T."/>
            <person name="Furuno M."/>
            <person name="Futaki S."/>
            <person name="Gariboldi M."/>
            <person name="Georgii-Hemming P."/>
            <person name="Gingeras T.R."/>
            <person name="Gojobori T."/>
            <person name="Green R.E."/>
            <person name="Gustincich S."/>
            <person name="Harbers M."/>
            <person name="Hayashi Y."/>
            <person name="Hensch T.K."/>
            <person name="Hirokawa N."/>
            <person name="Hill D."/>
            <person name="Huminiecki L."/>
            <person name="Iacono M."/>
            <person name="Ikeo K."/>
            <person name="Iwama A."/>
            <person name="Ishikawa T."/>
            <person name="Jakt M."/>
            <person name="Kanapin A."/>
            <person name="Katoh M."/>
            <person name="Kawasawa Y."/>
            <person name="Kelso J."/>
            <person name="Kitamura H."/>
            <person name="Kitano H."/>
            <person name="Kollias G."/>
            <person name="Krishnan S.P."/>
            <person name="Kruger A."/>
            <person name="Kummerfeld S.K."/>
            <person name="Kurochkin I.V."/>
            <person name="Lareau L.F."/>
            <person name="Lazarevic D."/>
            <person name="Lipovich L."/>
            <person name="Liu J."/>
            <person name="Liuni S."/>
            <person name="McWilliam S."/>
            <person name="Madan Babu M."/>
            <person name="Madera M."/>
            <person name="Marchionni L."/>
            <person name="Matsuda H."/>
            <person name="Matsuzawa S."/>
            <person name="Miki H."/>
            <person name="Mignone F."/>
            <person name="Miyake S."/>
            <person name="Morris K."/>
            <person name="Mottagui-Tabar S."/>
            <person name="Mulder N."/>
            <person name="Nakano N."/>
            <person name="Nakauchi H."/>
            <person name="Ng P."/>
            <person name="Nilsson R."/>
            <person name="Nishiguchi S."/>
            <person name="Nishikawa S."/>
            <person name="Nori F."/>
            <person name="Ohara O."/>
            <person name="Okazaki Y."/>
            <person name="Orlando V."/>
            <person name="Pang K.C."/>
            <person name="Pavan W.J."/>
            <person name="Pavesi G."/>
            <person name="Pesole G."/>
            <person name="Petrovsky N."/>
            <person name="Piazza S."/>
            <person name="Reed J."/>
            <person name="Reid J.F."/>
            <person name="Ring B.Z."/>
            <person name="Ringwald M."/>
            <person name="Rost B."/>
            <person name="Ruan Y."/>
            <person name="Salzberg S.L."/>
            <person name="Sandelin A."/>
            <person name="Schneider C."/>
            <person name="Schoenbach C."/>
            <person name="Sekiguchi K."/>
            <person name="Semple C.A."/>
            <person name="Seno S."/>
            <person name="Sessa L."/>
            <person name="Sheng Y."/>
            <person name="Shibata Y."/>
            <person name="Shimada H."/>
            <person name="Shimada K."/>
            <person name="Silva D."/>
            <person name="Sinclair B."/>
            <person name="Sperling S."/>
            <person name="Stupka E."/>
            <person name="Sugiura K."/>
            <person name="Sultana R."/>
            <person name="Takenaka Y."/>
            <person name="Taki K."/>
            <person name="Tammoja K."/>
            <person name="Tan S.L."/>
            <person name="Tang S."/>
            <person name="Taylor M.S."/>
            <person name="Tegner J."/>
            <person name="Teichmann S.A."/>
            <person name="Ueda H.R."/>
            <person name="van Nimwegen E."/>
            <person name="Verardo R."/>
            <person name="Wei C.L."/>
            <person name="Yagi K."/>
            <person name="Yamanishi H."/>
            <person name="Zabarovsky E."/>
            <person name="Zhu S."/>
            <person name="Zimmer A."/>
            <person name="Hide W."/>
            <person name="Bult C."/>
            <person name="Grimmond S.M."/>
            <person name="Teasdale R.D."/>
            <person name="Liu E.T."/>
            <person name="Brusic V."/>
            <person name="Quackenbush J."/>
            <person name="Wahlestedt C."/>
            <person name="Mattick J.S."/>
            <person name="Hume D.A."/>
            <person name="Kai C."/>
            <person name="Sasaki D."/>
            <person name="Tomaru Y."/>
            <person name="Fukuda S."/>
            <person name="Kanamori-Katayama M."/>
            <person name="Suzuki M."/>
            <person name="Aoki J."/>
            <person name="Arakawa T."/>
            <person name="Iida J."/>
            <person name="Imamura K."/>
            <person name="Itoh M."/>
            <person name="Kato T."/>
            <person name="Kawaji H."/>
            <person name="Kawagashira N."/>
            <person name="Kawashima T."/>
            <person name="Kojima M."/>
            <person name="Kondo S."/>
            <person name="Konno H."/>
            <person name="Nakano K."/>
            <person name="Ninomiya N."/>
            <person name="Nishio T."/>
            <person name="Okada M."/>
            <person name="Plessy C."/>
            <person name="Shibata K."/>
            <person name="Shiraki T."/>
            <person name="Suzuki S."/>
            <person name="Tagami M."/>
            <person name="Waki K."/>
            <person name="Watahiki A."/>
            <person name="Okamura-Oho Y."/>
            <person name="Suzuki H."/>
            <person name="Kawai J."/>
            <person name="Hayashizaki Y."/>
        </authorList>
    </citation>
    <scope>NUCLEOTIDE SEQUENCE [LARGE SCALE MRNA]</scope>
    <source>
        <strain>C57BL/6J</strain>
        <tissue>Cerebellum</tissue>
    </source>
</reference>
<reference key="2">
    <citation type="journal article" date="2004" name="Genome Res.">
        <title>The status, quality, and expansion of the NIH full-length cDNA project: the Mammalian Gene Collection (MGC).</title>
        <authorList>
            <consortium name="The MGC Project Team"/>
        </authorList>
    </citation>
    <scope>NUCLEOTIDE SEQUENCE [LARGE SCALE MRNA]</scope>
    <source>
        <tissue>Mammary tumor</tissue>
    </source>
</reference>
<reference key="3">
    <citation type="submission" date="1997-12" db="EMBL/GenBank/DDBJ databases">
        <authorList>
            <person name="Schoenfeld J.R."/>
            <person name="Lowe D.G."/>
        </authorList>
    </citation>
    <scope>NUCLEOTIDE SEQUENCE [MRNA] OF 99-368</scope>
    <source>
        <strain>C57BL/6J</strain>
        <tissue>Lung</tissue>
    </source>
</reference>
<reference key="4">
    <citation type="journal article" date="1993" name="Genomics">
        <title>Identification, chromosomal location, and genome organization of mammalian G-protein-coupled receptors.</title>
        <authorList>
            <person name="Wilkie T.M."/>
            <person name="Chen Y."/>
            <person name="Gilbert D.J."/>
            <person name="Moore K.J."/>
            <person name="Yu L."/>
            <person name="Simon M.I."/>
            <person name="Copeland N.G."/>
            <person name="Jenkins N.A."/>
        </authorList>
    </citation>
    <scope>NUCLEOTIDE SEQUENCE [MRNA] OF 198-314</scope>
    <source>
        <tissue>Testis</tissue>
    </source>
</reference>
<proteinExistence type="evidence at transcript level"/>
<organism>
    <name type="scientific">Mus musculus</name>
    <name type="common">Mouse</name>
    <dbReference type="NCBI Taxonomy" id="10090"/>
    <lineage>
        <taxon>Eukaryota</taxon>
        <taxon>Metazoa</taxon>
        <taxon>Chordata</taxon>
        <taxon>Craniata</taxon>
        <taxon>Vertebrata</taxon>
        <taxon>Euteleostomi</taxon>
        <taxon>Mammalia</taxon>
        <taxon>Eutheria</taxon>
        <taxon>Euarchontoglires</taxon>
        <taxon>Glires</taxon>
        <taxon>Rodentia</taxon>
        <taxon>Myomorpha</taxon>
        <taxon>Muroidea</taxon>
        <taxon>Muridae</taxon>
        <taxon>Murinae</taxon>
        <taxon>Mus</taxon>
        <taxon>Mus</taxon>
    </lineage>
</organism>
<dbReference type="EMBL" id="AK043210">
    <property type="protein sequence ID" value="BAC31493.1"/>
    <property type="molecule type" value="mRNA"/>
</dbReference>
<dbReference type="EMBL" id="BC008277">
    <property type="protein sequence ID" value="AAH08277.1"/>
    <property type="molecule type" value="mRNA"/>
</dbReference>
<dbReference type="EMBL" id="AF039892">
    <property type="protein sequence ID" value="AAB96671.1"/>
    <property type="molecule type" value="mRNA"/>
</dbReference>
<dbReference type="EMBL" id="L20340">
    <property type="protein sequence ID" value="AAA16845.1"/>
    <property type="molecule type" value="mRNA"/>
</dbReference>
<dbReference type="CCDS" id="CCDS22427.1"/>
<dbReference type="PIR" id="B57508">
    <property type="entry name" value="B57508"/>
</dbReference>
<dbReference type="RefSeq" id="NP_034462.1">
    <property type="nucleotide sequence ID" value="NM_010332.2"/>
</dbReference>
<dbReference type="SMR" id="Q61614"/>
<dbReference type="BioGRID" id="199380">
    <property type="interactions" value="2"/>
</dbReference>
<dbReference type="CORUM" id="Q61614"/>
<dbReference type="FunCoup" id="Q61614">
    <property type="interactions" value="977"/>
</dbReference>
<dbReference type="STRING" id="10090.ENSMUSP00000034029"/>
<dbReference type="BindingDB" id="Q61614"/>
<dbReference type="ChEMBL" id="CHEMBL2286"/>
<dbReference type="GlyCosmos" id="Q61614">
    <property type="glycosylation" value="3 sites, No reported glycans"/>
</dbReference>
<dbReference type="GlyGen" id="Q61614">
    <property type="glycosylation" value="4 sites, 2 N-linked glycans (2 sites)"/>
</dbReference>
<dbReference type="iPTMnet" id="Q61614"/>
<dbReference type="PhosphoSitePlus" id="Q61614"/>
<dbReference type="SwissPalm" id="Q61614"/>
<dbReference type="PaxDb" id="10090-ENSMUSP00000034029"/>
<dbReference type="ProteomicsDB" id="277797"/>
<dbReference type="Antibodypedia" id="2942">
    <property type="antibodies" value="356 antibodies from 34 providers"/>
</dbReference>
<dbReference type="DNASU" id="13617"/>
<dbReference type="Ensembl" id="ENSMUST00000034029.8">
    <property type="protein sequence ID" value="ENSMUSP00000034029.8"/>
    <property type="gene ID" value="ENSMUSG00000031616.8"/>
</dbReference>
<dbReference type="GeneID" id="13617"/>
<dbReference type="KEGG" id="mmu:13617"/>
<dbReference type="UCSC" id="uc009mhv.1">
    <property type="organism name" value="mouse"/>
</dbReference>
<dbReference type="AGR" id="MGI:105923"/>
<dbReference type="CTD" id="1909"/>
<dbReference type="MGI" id="MGI:105923">
    <property type="gene designation" value="Ednra"/>
</dbReference>
<dbReference type="VEuPathDB" id="HostDB:ENSMUSG00000031616"/>
<dbReference type="eggNOG" id="KOG3656">
    <property type="taxonomic scope" value="Eukaryota"/>
</dbReference>
<dbReference type="GeneTree" id="ENSGT01120000271837"/>
<dbReference type="HOGENOM" id="CLU_009579_28_0_1"/>
<dbReference type="InParanoid" id="Q61614"/>
<dbReference type="OMA" id="YNERDPG"/>
<dbReference type="OrthoDB" id="10049706at2759"/>
<dbReference type="PhylomeDB" id="Q61614"/>
<dbReference type="TreeFam" id="TF331292"/>
<dbReference type="Reactome" id="R-MMU-375276">
    <property type="pathway name" value="Peptide ligand-binding receptors"/>
</dbReference>
<dbReference type="Reactome" id="R-MMU-416476">
    <property type="pathway name" value="G alpha (q) signalling events"/>
</dbReference>
<dbReference type="BioGRID-ORCS" id="13617">
    <property type="hits" value="3 hits in 78 CRISPR screens"/>
</dbReference>
<dbReference type="ChiTaRS" id="Ednra">
    <property type="organism name" value="mouse"/>
</dbReference>
<dbReference type="PRO" id="PR:Q61614"/>
<dbReference type="Proteomes" id="UP000000589">
    <property type="component" value="Chromosome 8"/>
</dbReference>
<dbReference type="RNAct" id="Q61614">
    <property type="molecule type" value="protein"/>
</dbReference>
<dbReference type="Bgee" id="ENSMUSG00000031616">
    <property type="expression patterns" value="Expressed in undifferentiated genital tubercle and 216 other cell types or tissues"/>
</dbReference>
<dbReference type="GO" id="GO:0005886">
    <property type="term" value="C:plasma membrane"/>
    <property type="evidence" value="ECO:0000314"/>
    <property type="project" value="MGI"/>
</dbReference>
<dbReference type="GO" id="GO:0004962">
    <property type="term" value="F:endothelin receptor activity"/>
    <property type="evidence" value="ECO:0000315"/>
    <property type="project" value="MGI"/>
</dbReference>
<dbReference type="GO" id="GO:0004930">
    <property type="term" value="F:G protein-coupled receptor activity"/>
    <property type="evidence" value="ECO:0000304"/>
    <property type="project" value="MGI"/>
</dbReference>
<dbReference type="GO" id="GO:0007193">
    <property type="term" value="P:adenylate cyclase-inhibiting G protein-coupled receptor signaling pathway"/>
    <property type="evidence" value="ECO:0000316"/>
    <property type="project" value="MGI"/>
</dbReference>
<dbReference type="GO" id="GO:0001525">
    <property type="term" value="P:angiogenesis"/>
    <property type="evidence" value="ECO:0000316"/>
    <property type="project" value="MGI"/>
</dbReference>
<dbReference type="GO" id="GO:0035904">
    <property type="term" value="P:aorta development"/>
    <property type="evidence" value="ECO:0000315"/>
    <property type="project" value="MGI"/>
</dbReference>
<dbReference type="GO" id="GO:0014824">
    <property type="term" value="P:artery smooth muscle contraction"/>
    <property type="evidence" value="ECO:0007669"/>
    <property type="project" value="Ensembl"/>
</dbReference>
<dbReference type="GO" id="GO:0003228">
    <property type="term" value="P:atrial cardiac muscle tissue development"/>
    <property type="evidence" value="ECO:0000315"/>
    <property type="project" value="MGI"/>
</dbReference>
<dbReference type="GO" id="GO:0048675">
    <property type="term" value="P:axon extension"/>
    <property type="evidence" value="ECO:0000315"/>
    <property type="project" value="MGI"/>
</dbReference>
<dbReference type="GO" id="GO:0007411">
    <property type="term" value="P:axon guidance"/>
    <property type="evidence" value="ECO:0000315"/>
    <property type="project" value="MGI"/>
</dbReference>
<dbReference type="GO" id="GO:0060385">
    <property type="term" value="P:axonogenesis involved in innervation"/>
    <property type="evidence" value="ECO:0000315"/>
    <property type="project" value="MGI"/>
</dbReference>
<dbReference type="GO" id="GO:0001974">
    <property type="term" value="P:blood vessel remodeling"/>
    <property type="evidence" value="ECO:0000315"/>
    <property type="project" value="MGI"/>
</dbReference>
<dbReference type="GO" id="GO:0001569">
    <property type="term" value="P:branching involved in blood vessel morphogenesis"/>
    <property type="evidence" value="ECO:0000315"/>
    <property type="project" value="MGI"/>
</dbReference>
<dbReference type="GO" id="GO:0070588">
    <property type="term" value="P:calcium ion transmembrane transport"/>
    <property type="evidence" value="ECO:0000314"/>
    <property type="project" value="MGI"/>
</dbReference>
<dbReference type="GO" id="GO:0141156">
    <property type="term" value="P:cAMP/PKA signal transduction"/>
    <property type="evidence" value="ECO:0000266"/>
    <property type="project" value="MGI"/>
</dbReference>
<dbReference type="GO" id="GO:0060070">
    <property type="term" value="P:canonical Wnt signaling pathway"/>
    <property type="evidence" value="ECO:0000316"/>
    <property type="project" value="MGI"/>
</dbReference>
<dbReference type="GO" id="GO:0003207">
    <property type="term" value="P:cardiac chamber formation"/>
    <property type="evidence" value="ECO:0000315"/>
    <property type="project" value="MGI"/>
</dbReference>
<dbReference type="GO" id="GO:0003253">
    <property type="term" value="P:cardiac neural crest cell migration involved in outflow tract morphogenesis"/>
    <property type="evidence" value="ECO:0000315"/>
    <property type="project" value="MGI"/>
</dbReference>
<dbReference type="GO" id="GO:0071372">
    <property type="term" value="P:cellular response to follicle-stimulating hormone stimulus"/>
    <property type="evidence" value="ECO:0000314"/>
    <property type="project" value="MGI"/>
</dbReference>
<dbReference type="GO" id="GO:0044751">
    <property type="term" value="P:cellular response to human chorionic gonadotropin stimulus"/>
    <property type="evidence" value="ECO:0000314"/>
    <property type="project" value="MGI"/>
</dbReference>
<dbReference type="GO" id="GO:0070301">
    <property type="term" value="P:cellular response to hydrogen peroxide"/>
    <property type="evidence" value="ECO:0000266"/>
    <property type="project" value="MGI"/>
</dbReference>
<dbReference type="GO" id="GO:0071373">
    <property type="term" value="P:cellular response to luteinizing hormone stimulus"/>
    <property type="evidence" value="ECO:0000314"/>
    <property type="project" value="MGI"/>
</dbReference>
<dbReference type="GO" id="GO:0034599">
    <property type="term" value="P:cellular response to oxidative stress"/>
    <property type="evidence" value="ECO:0000315"/>
    <property type="project" value="MGI"/>
</dbReference>
<dbReference type="GO" id="GO:0097237">
    <property type="term" value="P:cellular response to toxic substance"/>
    <property type="evidence" value="ECO:0000314"/>
    <property type="project" value="MGI"/>
</dbReference>
<dbReference type="GO" id="GO:1904888">
    <property type="term" value="P:cranial skeletal system development"/>
    <property type="evidence" value="ECO:0000314"/>
    <property type="project" value="MGI"/>
</dbReference>
<dbReference type="GO" id="GO:0035050">
    <property type="term" value="P:embryonic heart tube development"/>
    <property type="evidence" value="ECO:0000315"/>
    <property type="project" value="MGI"/>
</dbReference>
<dbReference type="GO" id="GO:0048706">
    <property type="term" value="P:embryonic skeletal system development"/>
    <property type="evidence" value="ECO:0000316"/>
    <property type="project" value="MGI"/>
</dbReference>
<dbReference type="GO" id="GO:0086100">
    <property type="term" value="P:endothelin receptor signaling pathway"/>
    <property type="evidence" value="ECO:0000315"/>
    <property type="project" value="MGI"/>
</dbReference>
<dbReference type="GO" id="GO:0086101">
    <property type="term" value="P:endothelin receptor signaling pathway involved in heart process"/>
    <property type="evidence" value="ECO:0000315"/>
    <property type="project" value="MGI"/>
</dbReference>
<dbReference type="GO" id="GO:0048484">
    <property type="term" value="P:enteric nervous system development"/>
    <property type="evidence" value="ECO:0007669"/>
    <property type="project" value="InterPro"/>
</dbReference>
<dbReference type="GO" id="GO:0061028">
    <property type="term" value="P:establishment of endothelial barrier"/>
    <property type="evidence" value="ECO:0000314"/>
    <property type="project" value="MGI"/>
</dbReference>
<dbReference type="GO" id="GO:0060324">
    <property type="term" value="P:face development"/>
    <property type="evidence" value="ECO:0000314"/>
    <property type="project" value="MGI"/>
</dbReference>
<dbReference type="GO" id="GO:0007186">
    <property type="term" value="P:G protein-coupled receptor signaling pathway"/>
    <property type="evidence" value="ECO:0000304"/>
    <property type="project" value="MGI"/>
</dbReference>
<dbReference type="GO" id="GO:0010467">
    <property type="term" value="P:gene expression"/>
    <property type="evidence" value="ECO:0000315"/>
    <property type="project" value="MGI"/>
</dbReference>
<dbReference type="GO" id="GO:0072011">
    <property type="term" value="P:glomerular endothelium development"/>
    <property type="evidence" value="ECO:0000314"/>
    <property type="project" value="MGI"/>
</dbReference>
<dbReference type="GO" id="GO:0003094">
    <property type="term" value="P:glomerular filtration"/>
    <property type="evidence" value="ECO:0000314"/>
    <property type="project" value="MGI"/>
</dbReference>
<dbReference type="GO" id="GO:0032835">
    <property type="term" value="P:glomerulus development"/>
    <property type="evidence" value="ECO:0000315"/>
    <property type="project" value="MGI"/>
</dbReference>
<dbReference type="GO" id="GO:0060322">
    <property type="term" value="P:head development"/>
    <property type="evidence" value="ECO:0000315"/>
    <property type="project" value="MGI"/>
</dbReference>
<dbReference type="GO" id="GO:0007507">
    <property type="term" value="P:heart development"/>
    <property type="evidence" value="ECO:0000315"/>
    <property type="project" value="MGI"/>
</dbReference>
<dbReference type="GO" id="GO:0003015">
    <property type="term" value="P:heart process"/>
    <property type="evidence" value="ECO:0000315"/>
    <property type="project" value="MGI"/>
</dbReference>
<dbReference type="GO" id="GO:0030202">
    <property type="term" value="P:heparin proteoglycan metabolic process"/>
    <property type="evidence" value="ECO:0000316"/>
    <property type="project" value="MGI"/>
</dbReference>
<dbReference type="GO" id="GO:0001701">
    <property type="term" value="P:in utero embryonic development"/>
    <property type="evidence" value="ECO:0000315"/>
    <property type="project" value="MGI"/>
</dbReference>
<dbReference type="GO" id="GO:0006874">
    <property type="term" value="P:intracellular calcium ion homeostasis"/>
    <property type="evidence" value="ECO:0000315"/>
    <property type="project" value="MGI"/>
</dbReference>
<dbReference type="GO" id="GO:0003220">
    <property type="term" value="P:left ventricular cardiac muscle tissue morphogenesis"/>
    <property type="evidence" value="ECO:0000315"/>
    <property type="project" value="MGI"/>
</dbReference>
<dbReference type="GO" id="GO:1903537">
    <property type="term" value="P:meiotic cell cycle process involved in oocyte maturation"/>
    <property type="evidence" value="ECO:0000315"/>
    <property type="project" value="MGI"/>
</dbReference>
<dbReference type="GO" id="GO:0097152">
    <property type="term" value="P:mesenchymal cell apoptotic process"/>
    <property type="evidence" value="ECO:0000315"/>
    <property type="project" value="MGI"/>
</dbReference>
<dbReference type="GO" id="GO:0042474">
    <property type="term" value="P:middle ear morphogenesis"/>
    <property type="evidence" value="ECO:0000315"/>
    <property type="project" value="MGI"/>
</dbReference>
<dbReference type="GO" id="GO:0007005">
    <property type="term" value="P:mitochondrion organization"/>
    <property type="evidence" value="ECO:0000314"/>
    <property type="project" value="MGI"/>
</dbReference>
<dbReference type="GO" id="GO:0000278">
    <property type="term" value="P:mitotic cell cycle"/>
    <property type="evidence" value="ECO:0000315"/>
    <property type="project" value="MGI"/>
</dbReference>
<dbReference type="GO" id="GO:0014032">
    <property type="term" value="P:neural crest cell development"/>
    <property type="evidence" value="ECO:0000315"/>
    <property type="project" value="MGI"/>
</dbReference>
<dbReference type="GO" id="GO:0014033">
    <property type="term" value="P:neural crest cell differentiation"/>
    <property type="evidence" value="ECO:0000315"/>
    <property type="project" value="MGI"/>
</dbReference>
<dbReference type="GO" id="GO:0014034">
    <property type="term" value="P:neural crest cell fate commitment"/>
    <property type="evidence" value="ECO:0000315"/>
    <property type="project" value="MGI"/>
</dbReference>
<dbReference type="GO" id="GO:0050905">
    <property type="term" value="P:neuromuscular process"/>
    <property type="evidence" value="ECO:0000315"/>
    <property type="project" value="MGI"/>
</dbReference>
<dbReference type="GO" id="GO:0031175">
    <property type="term" value="P:neuron projection development"/>
    <property type="evidence" value="ECO:0000315"/>
    <property type="project" value="MGI"/>
</dbReference>
<dbReference type="GO" id="GO:0016322">
    <property type="term" value="P:neuron remodeling"/>
    <property type="evidence" value="ECO:0000315"/>
    <property type="project" value="MGI"/>
</dbReference>
<dbReference type="GO" id="GO:0003357">
    <property type="term" value="P:noradrenergic neuron differentiation"/>
    <property type="evidence" value="ECO:0000315"/>
    <property type="project" value="MGI"/>
</dbReference>
<dbReference type="GO" id="GO:0042415">
    <property type="term" value="P:norepinephrine metabolic process"/>
    <property type="evidence" value="ECO:0000315"/>
    <property type="project" value="MGI"/>
</dbReference>
<dbReference type="GO" id="GO:0061626">
    <property type="term" value="P:pharyngeal arch artery morphogenesis"/>
    <property type="evidence" value="ECO:0000315"/>
    <property type="project" value="MGI"/>
</dbReference>
<dbReference type="GO" id="GO:1903210">
    <property type="term" value="P:podocyte apoptotic process"/>
    <property type="evidence" value="ECO:0000315"/>
    <property type="project" value="MGI"/>
</dbReference>
<dbReference type="GO" id="GO:0072112">
    <property type="term" value="P:podocyte differentiation"/>
    <property type="evidence" value="ECO:0000314"/>
    <property type="project" value="MGI"/>
</dbReference>
<dbReference type="GO" id="GO:0043123">
    <property type="term" value="P:positive regulation of canonical NF-kappaB signal transduction"/>
    <property type="evidence" value="ECO:0000315"/>
    <property type="project" value="MGI"/>
</dbReference>
<dbReference type="GO" id="GO:0071806">
    <property type="term" value="P:protein transmembrane transport"/>
    <property type="evidence" value="ECO:0000314"/>
    <property type="project" value="MGI"/>
</dbReference>
<dbReference type="GO" id="GO:0008217">
    <property type="term" value="P:regulation of blood pressure"/>
    <property type="evidence" value="ECO:0000315"/>
    <property type="project" value="MGI"/>
</dbReference>
<dbReference type="GO" id="GO:0010827">
    <property type="term" value="P:regulation of D-glucose transmembrane transport"/>
    <property type="evidence" value="ECO:0000314"/>
    <property type="project" value="MGI"/>
</dbReference>
<dbReference type="GO" id="GO:0002027">
    <property type="term" value="P:regulation of heart rate"/>
    <property type="evidence" value="ECO:0000315"/>
    <property type="project" value="MGI"/>
</dbReference>
<dbReference type="GO" id="GO:1905871">
    <property type="term" value="P:regulation of protein localization to cell leading edge"/>
    <property type="evidence" value="ECO:0000315"/>
    <property type="project" value="MGI"/>
</dbReference>
<dbReference type="GO" id="GO:0097018">
    <property type="term" value="P:renal albumin absorption"/>
    <property type="evidence" value="ECO:0000314"/>
    <property type="project" value="MGI"/>
</dbReference>
<dbReference type="GO" id="GO:0070294">
    <property type="term" value="P:renal sodium ion absorption"/>
    <property type="evidence" value="ECO:0000315"/>
    <property type="project" value="MGI"/>
</dbReference>
<dbReference type="GO" id="GO:0007585">
    <property type="term" value="P:respiratory gaseous exchange by respiratory system"/>
    <property type="evidence" value="ECO:0000315"/>
    <property type="project" value="MGI"/>
</dbReference>
<dbReference type="GO" id="GO:1905144">
    <property type="term" value="P:response to acetylcholine"/>
    <property type="evidence" value="ECO:0000315"/>
    <property type="project" value="MGI"/>
</dbReference>
<dbReference type="GO" id="GO:0001975">
    <property type="term" value="P:response to amphetamine"/>
    <property type="evidence" value="ECO:0000315"/>
    <property type="project" value="MGI"/>
</dbReference>
<dbReference type="GO" id="GO:0001666">
    <property type="term" value="P:response to hypoxia"/>
    <property type="evidence" value="ECO:0000315"/>
    <property type="project" value="MGI"/>
</dbReference>
<dbReference type="GO" id="GO:0009611">
    <property type="term" value="P:response to wounding"/>
    <property type="evidence" value="ECO:0000315"/>
    <property type="project" value="MGI"/>
</dbReference>
<dbReference type="GO" id="GO:1902287">
    <property type="term" value="P:semaphorin-plexin signaling pathway involved in axon guidance"/>
    <property type="evidence" value="ECO:0000315"/>
    <property type="project" value="MGI"/>
</dbReference>
<dbReference type="GO" id="GO:0055078">
    <property type="term" value="P:sodium ion homeostasis"/>
    <property type="evidence" value="ECO:0000316"/>
    <property type="project" value="MGI"/>
</dbReference>
<dbReference type="GO" id="GO:0042305">
    <property type="term" value="P:specification of segmental identity, mandibular segment"/>
    <property type="evidence" value="ECO:0000315"/>
    <property type="project" value="MGI"/>
</dbReference>
<dbReference type="GO" id="GO:0007382">
    <property type="term" value="P:specification of segmental identity, maxillary segment"/>
    <property type="evidence" value="ECO:0000315"/>
    <property type="project" value="MGI"/>
</dbReference>
<dbReference type="GO" id="GO:0048485">
    <property type="term" value="P:sympathetic nervous system development"/>
    <property type="evidence" value="ECO:0000315"/>
    <property type="project" value="MGI"/>
</dbReference>
<dbReference type="GO" id="GO:0097492">
    <property type="term" value="P:sympathetic neuron axon guidance"/>
    <property type="evidence" value="ECO:0000316"/>
    <property type="project" value="MGI"/>
</dbReference>
<dbReference type="GO" id="GO:0030878">
    <property type="term" value="P:thyroid gland development"/>
    <property type="evidence" value="ECO:0000315"/>
    <property type="project" value="MGI"/>
</dbReference>
<dbReference type="GO" id="GO:0097084">
    <property type="term" value="P:vascular associated smooth muscle cell development"/>
    <property type="evidence" value="ECO:0000315"/>
    <property type="project" value="MGI"/>
</dbReference>
<dbReference type="GO" id="GO:0042310">
    <property type="term" value="P:vasoconstriction"/>
    <property type="evidence" value="ECO:0000315"/>
    <property type="project" value="MGI"/>
</dbReference>
<dbReference type="CDD" id="cd15975">
    <property type="entry name" value="7tmA_ET-AR"/>
    <property type="match status" value="1"/>
</dbReference>
<dbReference type="FunFam" id="1.20.1070.10:FF:000076">
    <property type="entry name" value="Endothelin receptor type B"/>
    <property type="match status" value="1"/>
</dbReference>
<dbReference type="Gene3D" id="1.20.1070.10">
    <property type="entry name" value="Rhodopsin 7-helix transmembrane proteins"/>
    <property type="match status" value="1"/>
</dbReference>
<dbReference type="InterPro" id="IPR000499">
    <property type="entry name" value="Endthln_rcpt"/>
</dbReference>
<dbReference type="InterPro" id="IPR002175">
    <property type="entry name" value="ETA_rcpt"/>
</dbReference>
<dbReference type="InterPro" id="IPR051193">
    <property type="entry name" value="GPCR_endothelin_rcpt"/>
</dbReference>
<dbReference type="InterPro" id="IPR000276">
    <property type="entry name" value="GPCR_Rhodpsn"/>
</dbReference>
<dbReference type="InterPro" id="IPR017452">
    <property type="entry name" value="GPCR_Rhodpsn_7TM"/>
</dbReference>
<dbReference type="PANTHER" id="PTHR46099:SF2">
    <property type="entry name" value="ENDOTHELIN-1 RECEPTOR"/>
    <property type="match status" value="1"/>
</dbReference>
<dbReference type="PANTHER" id="PTHR46099">
    <property type="entry name" value="G_PROTEIN_RECEP_F1_2 DOMAIN-CONTAINING PROTEIN"/>
    <property type="match status" value="1"/>
</dbReference>
<dbReference type="Pfam" id="PF00001">
    <property type="entry name" value="7tm_1"/>
    <property type="match status" value="1"/>
</dbReference>
<dbReference type="PRINTS" id="PR00570">
    <property type="entry name" value="ENDOTHELINAR"/>
</dbReference>
<dbReference type="PRINTS" id="PR00366">
    <property type="entry name" value="ENDOTHELINR"/>
</dbReference>
<dbReference type="PRINTS" id="PR00237">
    <property type="entry name" value="GPCRRHODOPSN"/>
</dbReference>
<dbReference type="SUPFAM" id="SSF81321">
    <property type="entry name" value="Family A G protein-coupled receptor-like"/>
    <property type="match status" value="1"/>
</dbReference>
<dbReference type="PROSITE" id="PS00237">
    <property type="entry name" value="G_PROTEIN_RECEP_F1_1"/>
    <property type="match status" value="1"/>
</dbReference>
<dbReference type="PROSITE" id="PS50262">
    <property type="entry name" value="G_PROTEIN_RECEP_F1_2"/>
    <property type="match status" value="1"/>
</dbReference>